<gene>
    <name evidence="3" type="primary">CCB1</name>
    <name evidence="6" type="ordered locus">At3g26710</name>
    <name evidence="7" type="ORF">MLJ15.10</name>
</gene>
<feature type="transit peptide" description="Chloroplast" evidence="1">
    <location>
        <begin position="1"/>
        <end position="44"/>
    </location>
</feature>
<feature type="chain" id="PRO_0000433262" description="Protein COFACTOR ASSEMBLY OF COMPLEX C SUBUNIT B CCB1, chloroplastic" evidence="1">
    <location>
        <begin position="45"/>
        <end position="267"/>
    </location>
</feature>
<feature type="topological domain" description="Lumenal" evidence="5">
    <location>
        <begin position="45"/>
        <end position="84"/>
    </location>
</feature>
<feature type="transmembrane region" description="Helical" evidence="1">
    <location>
        <begin position="85"/>
        <end position="105"/>
    </location>
</feature>
<feature type="topological domain" description="Stromal" evidence="5">
    <location>
        <begin position="106"/>
        <end position="164"/>
    </location>
</feature>
<feature type="transmembrane region" description="Helical" evidence="1">
    <location>
        <begin position="165"/>
        <end position="185"/>
    </location>
</feature>
<feature type="topological domain" description="Lumenal" evidence="5">
    <location>
        <position position="186"/>
    </location>
</feature>
<feature type="transmembrane region" description="Helical" evidence="1">
    <location>
        <begin position="187"/>
        <end position="207"/>
    </location>
</feature>
<feature type="topological domain" description="Stromal" evidence="5">
    <location>
        <begin position="208"/>
        <end position="267"/>
    </location>
</feature>
<proteinExistence type="evidence at protein level"/>
<accession>Q9LSE4</accession>
<accession>Q38964</accession>
<evidence type="ECO:0000255" key="1"/>
<evidence type="ECO:0000269" key="2">
    <source>
    </source>
</evidence>
<evidence type="ECO:0000303" key="3">
    <source>
    </source>
</evidence>
<evidence type="ECO:0000305" key="4"/>
<evidence type="ECO:0000305" key="5">
    <source>
    </source>
</evidence>
<evidence type="ECO:0000312" key="6">
    <source>
        <dbReference type="Araport" id="AT3G26710"/>
    </source>
</evidence>
<evidence type="ECO:0000312" key="7">
    <source>
        <dbReference type="EMBL" id="BAB01734.1"/>
    </source>
</evidence>
<reference key="1">
    <citation type="journal article" date="1996" name="Nucleic Acids Res.">
        <title>Sequence analysis of an 81 kb contig from Arabidopsis thaliana chromosome III.</title>
        <authorList>
            <person name="Quigley F."/>
            <person name="Dao P."/>
            <person name="Cottet A."/>
            <person name="Mache R."/>
        </authorList>
    </citation>
    <scope>NUCLEOTIDE SEQUENCE [GENOMIC DNA]</scope>
    <source>
        <strain>cv. Columbia</strain>
    </source>
</reference>
<reference key="2">
    <citation type="journal article" date="2000" name="DNA Res.">
        <title>Structural analysis of Arabidopsis thaliana chromosome 3. I. Sequence features of the regions of 4,504,864 bp covered by sixty P1 and TAC clones.</title>
        <authorList>
            <person name="Sato S."/>
            <person name="Nakamura Y."/>
            <person name="Kaneko T."/>
            <person name="Katoh T."/>
            <person name="Asamizu E."/>
            <person name="Tabata S."/>
        </authorList>
    </citation>
    <scope>NUCLEOTIDE SEQUENCE [LARGE SCALE GENOMIC DNA]</scope>
    <source>
        <strain>cv. Columbia</strain>
    </source>
</reference>
<reference key="3">
    <citation type="journal article" date="2017" name="Plant J.">
        <title>Araport11: a complete reannotation of the Arabidopsis thaliana reference genome.</title>
        <authorList>
            <person name="Cheng C.Y."/>
            <person name="Krishnakumar V."/>
            <person name="Chan A.P."/>
            <person name="Thibaud-Nissen F."/>
            <person name="Schobel S."/>
            <person name="Town C.D."/>
        </authorList>
    </citation>
    <scope>GENOME REANNOTATION</scope>
    <source>
        <strain>cv. Columbia</strain>
    </source>
</reference>
<reference key="4">
    <citation type="journal article" date="2003" name="Science">
        <title>Empirical analysis of transcriptional activity in the Arabidopsis genome.</title>
        <authorList>
            <person name="Yamada K."/>
            <person name="Lim J."/>
            <person name="Dale J.M."/>
            <person name="Chen H."/>
            <person name="Shinn P."/>
            <person name="Palm C.J."/>
            <person name="Southwick A.M."/>
            <person name="Wu H.C."/>
            <person name="Kim C.J."/>
            <person name="Nguyen M."/>
            <person name="Pham P.K."/>
            <person name="Cheuk R.F."/>
            <person name="Karlin-Newmann G."/>
            <person name="Liu S.X."/>
            <person name="Lam B."/>
            <person name="Sakano H."/>
            <person name="Wu T."/>
            <person name="Yu G."/>
            <person name="Miranda M."/>
            <person name="Quach H.L."/>
            <person name="Tripp M."/>
            <person name="Chang C.H."/>
            <person name="Lee J.M."/>
            <person name="Toriumi M.J."/>
            <person name="Chan M.M."/>
            <person name="Tang C.C."/>
            <person name="Onodera C.S."/>
            <person name="Deng J.M."/>
            <person name="Akiyama K."/>
            <person name="Ansari Y."/>
            <person name="Arakawa T."/>
            <person name="Banh J."/>
            <person name="Banno F."/>
            <person name="Bowser L."/>
            <person name="Brooks S.Y."/>
            <person name="Carninci P."/>
            <person name="Chao Q."/>
            <person name="Choy N."/>
            <person name="Enju A."/>
            <person name="Goldsmith A.D."/>
            <person name="Gurjal M."/>
            <person name="Hansen N.F."/>
            <person name="Hayashizaki Y."/>
            <person name="Johnson-Hopson C."/>
            <person name="Hsuan V.W."/>
            <person name="Iida K."/>
            <person name="Karnes M."/>
            <person name="Khan S."/>
            <person name="Koesema E."/>
            <person name="Ishida J."/>
            <person name="Jiang P.X."/>
            <person name="Jones T."/>
            <person name="Kawai J."/>
            <person name="Kamiya A."/>
            <person name="Meyers C."/>
            <person name="Nakajima M."/>
            <person name="Narusaka M."/>
            <person name="Seki M."/>
            <person name="Sakurai T."/>
            <person name="Satou M."/>
            <person name="Tamse R."/>
            <person name="Vaysberg M."/>
            <person name="Wallender E.K."/>
            <person name="Wong C."/>
            <person name="Yamamura Y."/>
            <person name="Yuan S."/>
            <person name="Shinozaki K."/>
            <person name="Davis R.W."/>
            <person name="Theologis A."/>
            <person name="Ecker J.R."/>
        </authorList>
    </citation>
    <scope>NUCLEOTIDE SEQUENCE [LARGE SCALE MRNA]</scope>
    <source>
        <strain>cv. Columbia</strain>
    </source>
</reference>
<reference key="5">
    <citation type="submission" date="2006-07" db="EMBL/GenBank/DDBJ databases">
        <title>Large-scale analysis of RIKEN Arabidopsis full-length (RAFL) cDNAs.</title>
        <authorList>
            <person name="Totoki Y."/>
            <person name="Seki M."/>
            <person name="Ishida J."/>
            <person name="Nakajima M."/>
            <person name="Enju A."/>
            <person name="Kamiya A."/>
            <person name="Narusaka M."/>
            <person name="Shin-i T."/>
            <person name="Nakagawa M."/>
            <person name="Sakamoto N."/>
            <person name="Oishi K."/>
            <person name="Kohara Y."/>
            <person name="Kobayashi M."/>
            <person name="Toyoda A."/>
            <person name="Sakaki Y."/>
            <person name="Sakurai T."/>
            <person name="Iida K."/>
            <person name="Akiyama K."/>
            <person name="Satou M."/>
            <person name="Toyoda T."/>
            <person name="Konagaya A."/>
            <person name="Carninci P."/>
            <person name="Kawai J."/>
            <person name="Hayashizaki Y."/>
            <person name="Shinozaki K."/>
        </authorList>
    </citation>
    <scope>NUCLEOTIDE SEQUENCE [LARGE SCALE MRNA]</scope>
    <source>
        <strain>cv. Columbia</strain>
    </source>
</reference>
<reference key="6">
    <citation type="submission" date="2002-03" db="EMBL/GenBank/DDBJ databases">
        <title>Full-length cDNA from Arabidopsis thaliana.</title>
        <authorList>
            <person name="Brover V.V."/>
            <person name="Troukhan M.E."/>
            <person name="Alexandrov N.A."/>
            <person name="Lu Y.-P."/>
            <person name="Flavell R.B."/>
            <person name="Feldmann K.A."/>
        </authorList>
    </citation>
    <scope>NUCLEOTIDE SEQUENCE [LARGE SCALE MRNA]</scope>
</reference>
<reference key="7">
    <citation type="journal article" date="2008" name="J. Biol. Chem.">
        <title>A novel pathway of cytochrome c biogenesis is involved in the assembly of the cytochrome b6f complex in arabidopsis chloroplasts.</title>
        <authorList>
            <person name="Lezhneva L."/>
            <person name="Kuras R."/>
            <person name="Ephritikhine G."/>
            <person name="de Vitry C."/>
        </authorList>
    </citation>
    <scope>FUNCTION</scope>
    <scope>SUBCELLULAR LOCATION</scope>
    <scope>TOPOLOGY</scope>
    <scope>DISRUPTION PHENOTYPE</scope>
</reference>
<dbReference type="EMBL" id="X98130">
    <property type="protein sequence ID" value="CAA66820.1"/>
    <property type="status" value="ALT_SEQ"/>
    <property type="molecule type" value="Genomic_DNA"/>
</dbReference>
<dbReference type="EMBL" id="AB026648">
    <property type="protein sequence ID" value="BAB01734.1"/>
    <property type="molecule type" value="Genomic_DNA"/>
</dbReference>
<dbReference type="EMBL" id="CP002686">
    <property type="protein sequence ID" value="AEE77202.1"/>
    <property type="molecule type" value="Genomic_DNA"/>
</dbReference>
<dbReference type="EMBL" id="AY140025">
    <property type="protein sequence ID" value="AAM98166.1"/>
    <property type="molecule type" value="mRNA"/>
</dbReference>
<dbReference type="EMBL" id="BT006294">
    <property type="protein sequence ID" value="AAP13402.1"/>
    <property type="molecule type" value="mRNA"/>
</dbReference>
<dbReference type="EMBL" id="AK227251">
    <property type="protein sequence ID" value="BAE99286.1"/>
    <property type="molecule type" value="mRNA"/>
</dbReference>
<dbReference type="EMBL" id="AY087129">
    <property type="protein sequence ID" value="AAM64687.1"/>
    <property type="molecule type" value="mRNA"/>
</dbReference>
<dbReference type="RefSeq" id="NP_566797.1">
    <property type="nucleotide sequence ID" value="NM_113582.5"/>
</dbReference>
<dbReference type="FunCoup" id="Q9LSE4">
    <property type="interactions" value="1157"/>
</dbReference>
<dbReference type="STRING" id="3702.Q9LSE4"/>
<dbReference type="PaxDb" id="3702-AT3G26710.1"/>
<dbReference type="ProteomicsDB" id="223873"/>
<dbReference type="EnsemblPlants" id="AT3G26710.1">
    <property type="protein sequence ID" value="AT3G26710.1"/>
    <property type="gene ID" value="AT3G26710"/>
</dbReference>
<dbReference type="GeneID" id="822283"/>
<dbReference type="Gramene" id="AT3G26710.1">
    <property type="protein sequence ID" value="AT3G26710.1"/>
    <property type="gene ID" value="AT3G26710"/>
</dbReference>
<dbReference type="KEGG" id="ath:AT3G26710"/>
<dbReference type="Araport" id="AT3G26710"/>
<dbReference type="TAIR" id="AT3G26710">
    <property type="gene designation" value="CCB1"/>
</dbReference>
<dbReference type="eggNOG" id="ENOG502QR1Q">
    <property type="taxonomic scope" value="Eukaryota"/>
</dbReference>
<dbReference type="HOGENOM" id="CLU_067692_1_0_1"/>
<dbReference type="InParanoid" id="Q9LSE4"/>
<dbReference type="OMA" id="WFWLTIL"/>
<dbReference type="PhylomeDB" id="Q9LSE4"/>
<dbReference type="PRO" id="PR:Q9LSE4"/>
<dbReference type="Proteomes" id="UP000006548">
    <property type="component" value="Chromosome 3"/>
</dbReference>
<dbReference type="ExpressionAtlas" id="Q9LSE4">
    <property type="expression patterns" value="baseline and differential"/>
</dbReference>
<dbReference type="GO" id="GO:0009507">
    <property type="term" value="C:chloroplast"/>
    <property type="evidence" value="ECO:0000314"/>
    <property type="project" value="TAIR"/>
</dbReference>
<dbReference type="GO" id="GO:0009535">
    <property type="term" value="C:chloroplast thylakoid membrane"/>
    <property type="evidence" value="ECO:0007669"/>
    <property type="project" value="UniProtKB-SubCell"/>
</dbReference>
<dbReference type="GO" id="GO:0005829">
    <property type="term" value="C:cytosol"/>
    <property type="evidence" value="ECO:0007005"/>
    <property type="project" value="TAIR"/>
</dbReference>
<dbReference type="GO" id="GO:0010190">
    <property type="term" value="P:cytochrome b6f complex assembly"/>
    <property type="evidence" value="ECO:0000315"/>
    <property type="project" value="TAIR"/>
</dbReference>
<dbReference type="InterPro" id="IPR021919">
    <property type="entry name" value="CCB1"/>
</dbReference>
<dbReference type="PANTHER" id="PTHR35302">
    <property type="match status" value="1"/>
</dbReference>
<dbReference type="PANTHER" id="PTHR35302:SF1">
    <property type="entry name" value="PROTEIN COFACTOR ASSEMBLY OF COMPLEX C SUBUNIT B CCB1, CHLOROPLASTIC"/>
    <property type="match status" value="1"/>
</dbReference>
<dbReference type="Pfam" id="PF12046">
    <property type="entry name" value="CCB1"/>
    <property type="match status" value="1"/>
</dbReference>
<name>CCB1_ARATH</name>
<sequence length="267" mass="30101">MATKLISPPLSCPWVTSREVIIKGLPRRRREWMVTKRNRVSAVTAMIVEPLSVVSSSAIQIHQWWEQNPNSLLLMTEATGGYSLASYYTSLGLFVISVPGLWSLIKRSVKSKIVRKTFVVNDVKKEPKQVAGEILSFFTRKNFNITDRGETITFEGKMVPSRGQAALLTFCTCISLASVGLVLTITVPDFGNNWFFIILLSPLAGVYYWKKASRKEEIKVKMMVGSKGRLDEIVVQGDDVQVEEMRKELQLNEKGMVYVKGLFERSS</sequence>
<comment type="function">
    <text evidence="2">Required for the biogenesis and accumulation of native cytochrome b6 in the thylakoid membrane. Controls the conversion of apocytochrome b6 to holocytochrome b6. Required for covalent binding of the c-type heme to cytochrome b6.</text>
</comment>
<comment type="subcellular location">
    <subcellularLocation>
        <location evidence="5">Plastid</location>
        <location evidence="5">Chloroplast thylakoid membrane</location>
        <topology evidence="1">Multi-pass membrane protein</topology>
    </subcellularLocation>
</comment>
<comment type="disruption phenotype">
    <text evidence="2">Seedling lethal when grown on soil. On agar plates supplied with sucrose, seedlings grow very slowly with a chlorotic phenotype. Deficiency in the accumulation of the subunits of the cytochrome b6f complex and lack of covalent heme binding to cytochrome b6.</text>
</comment>
<comment type="sequence caution" evidence="4">
    <conflict type="erroneous gene model prediction">
        <sequence resource="EMBL-CDS" id="CAA66820"/>
    </conflict>
</comment>
<organism>
    <name type="scientific">Arabidopsis thaliana</name>
    <name type="common">Mouse-ear cress</name>
    <dbReference type="NCBI Taxonomy" id="3702"/>
    <lineage>
        <taxon>Eukaryota</taxon>
        <taxon>Viridiplantae</taxon>
        <taxon>Streptophyta</taxon>
        <taxon>Embryophyta</taxon>
        <taxon>Tracheophyta</taxon>
        <taxon>Spermatophyta</taxon>
        <taxon>Magnoliopsida</taxon>
        <taxon>eudicotyledons</taxon>
        <taxon>Gunneridae</taxon>
        <taxon>Pentapetalae</taxon>
        <taxon>rosids</taxon>
        <taxon>malvids</taxon>
        <taxon>Brassicales</taxon>
        <taxon>Brassicaceae</taxon>
        <taxon>Camelineae</taxon>
        <taxon>Arabidopsis</taxon>
    </lineage>
</organism>
<protein>
    <recommendedName>
        <fullName evidence="4">Protein COFACTOR ASSEMBLY OF COMPLEX C SUBUNIT B CCB1, chloroplastic</fullName>
    </recommendedName>
</protein>
<keyword id="KW-0150">Chloroplast</keyword>
<keyword id="KW-0472">Membrane</keyword>
<keyword id="KW-0934">Plastid</keyword>
<keyword id="KW-1185">Reference proteome</keyword>
<keyword id="KW-0793">Thylakoid</keyword>
<keyword id="KW-0809">Transit peptide</keyword>
<keyword id="KW-0812">Transmembrane</keyword>
<keyword id="KW-1133">Transmembrane helix</keyword>